<reference key="1">
    <citation type="submission" date="2008-01" db="EMBL/GenBank/DDBJ databases">
        <title>Complete sequence of Thermoanaerobacter pseudethanolicus 39E.</title>
        <authorList>
            <person name="Copeland A."/>
            <person name="Lucas S."/>
            <person name="Lapidus A."/>
            <person name="Barry K."/>
            <person name="Glavina del Rio T."/>
            <person name="Dalin E."/>
            <person name="Tice H."/>
            <person name="Pitluck S."/>
            <person name="Bruce D."/>
            <person name="Goodwin L."/>
            <person name="Saunders E."/>
            <person name="Brettin T."/>
            <person name="Detter J.C."/>
            <person name="Han C."/>
            <person name="Schmutz J."/>
            <person name="Larimer F."/>
            <person name="Land M."/>
            <person name="Hauser L."/>
            <person name="Kyrpides N."/>
            <person name="Lykidis A."/>
            <person name="Hemme C."/>
            <person name="Fields M.W."/>
            <person name="He Z."/>
            <person name="Zhou J."/>
            <person name="Richardson P."/>
        </authorList>
    </citation>
    <scope>NUCLEOTIDE SEQUENCE [LARGE SCALE GENOMIC DNA]</scope>
    <source>
        <strain>ATCC 33223 / DSM 2355 / 39E</strain>
    </source>
</reference>
<protein>
    <recommendedName>
        <fullName evidence="1">Large ribosomal subunit protein uL14</fullName>
    </recommendedName>
    <alternativeName>
        <fullName evidence="2">50S ribosomal protein L14</fullName>
    </alternativeName>
</protein>
<evidence type="ECO:0000255" key="1">
    <source>
        <dbReference type="HAMAP-Rule" id="MF_01367"/>
    </source>
</evidence>
<evidence type="ECO:0000305" key="2"/>
<proteinExistence type="inferred from homology"/>
<comment type="function">
    <text evidence="1">Binds to 23S rRNA. Forms part of two intersubunit bridges in the 70S ribosome.</text>
</comment>
<comment type="subunit">
    <text evidence="1">Part of the 50S ribosomal subunit. Forms a cluster with proteins L3 and L19. In the 70S ribosome, L14 and L19 interact and together make contacts with the 16S rRNA in bridges B5 and B8.</text>
</comment>
<comment type="similarity">
    <text evidence="1">Belongs to the universal ribosomal protein uL14 family.</text>
</comment>
<gene>
    <name evidence="1" type="primary">rplN</name>
    <name type="ordered locus">Teth39_0384</name>
</gene>
<feature type="chain" id="PRO_1000144342" description="Large ribosomal subunit protein uL14">
    <location>
        <begin position="1"/>
        <end position="122"/>
    </location>
</feature>
<accession>B0KCL0</accession>
<name>RL14_THEP3</name>
<keyword id="KW-1185">Reference proteome</keyword>
<keyword id="KW-0687">Ribonucleoprotein</keyword>
<keyword id="KW-0689">Ribosomal protein</keyword>
<keyword id="KW-0694">RNA-binding</keyword>
<keyword id="KW-0699">rRNA-binding</keyword>
<dbReference type="EMBL" id="CP000924">
    <property type="protein sequence ID" value="ABY94053.1"/>
    <property type="molecule type" value="Genomic_DNA"/>
</dbReference>
<dbReference type="RefSeq" id="WP_003868570.1">
    <property type="nucleotide sequence ID" value="NC_010321.1"/>
</dbReference>
<dbReference type="SMR" id="B0KCL0"/>
<dbReference type="STRING" id="340099.Teth39_0384"/>
<dbReference type="KEGG" id="tpd:Teth39_0384"/>
<dbReference type="eggNOG" id="COG0093">
    <property type="taxonomic scope" value="Bacteria"/>
</dbReference>
<dbReference type="HOGENOM" id="CLU_095071_2_1_9"/>
<dbReference type="Proteomes" id="UP000002156">
    <property type="component" value="Chromosome"/>
</dbReference>
<dbReference type="GO" id="GO:0022625">
    <property type="term" value="C:cytosolic large ribosomal subunit"/>
    <property type="evidence" value="ECO:0007669"/>
    <property type="project" value="TreeGrafter"/>
</dbReference>
<dbReference type="GO" id="GO:0070180">
    <property type="term" value="F:large ribosomal subunit rRNA binding"/>
    <property type="evidence" value="ECO:0007669"/>
    <property type="project" value="TreeGrafter"/>
</dbReference>
<dbReference type="GO" id="GO:0003735">
    <property type="term" value="F:structural constituent of ribosome"/>
    <property type="evidence" value="ECO:0007669"/>
    <property type="project" value="InterPro"/>
</dbReference>
<dbReference type="GO" id="GO:0006412">
    <property type="term" value="P:translation"/>
    <property type="evidence" value="ECO:0007669"/>
    <property type="project" value="UniProtKB-UniRule"/>
</dbReference>
<dbReference type="CDD" id="cd00337">
    <property type="entry name" value="Ribosomal_uL14"/>
    <property type="match status" value="1"/>
</dbReference>
<dbReference type="FunFam" id="2.40.150.20:FF:000001">
    <property type="entry name" value="50S ribosomal protein L14"/>
    <property type="match status" value="1"/>
</dbReference>
<dbReference type="Gene3D" id="2.40.150.20">
    <property type="entry name" value="Ribosomal protein L14"/>
    <property type="match status" value="1"/>
</dbReference>
<dbReference type="HAMAP" id="MF_01367">
    <property type="entry name" value="Ribosomal_uL14"/>
    <property type="match status" value="1"/>
</dbReference>
<dbReference type="InterPro" id="IPR000218">
    <property type="entry name" value="Ribosomal_uL14"/>
</dbReference>
<dbReference type="InterPro" id="IPR005745">
    <property type="entry name" value="Ribosomal_uL14_bac-type"/>
</dbReference>
<dbReference type="InterPro" id="IPR019972">
    <property type="entry name" value="Ribosomal_uL14_CS"/>
</dbReference>
<dbReference type="InterPro" id="IPR036853">
    <property type="entry name" value="Ribosomal_uL14_sf"/>
</dbReference>
<dbReference type="NCBIfam" id="TIGR01067">
    <property type="entry name" value="rplN_bact"/>
    <property type="match status" value="1"/>
</dbReference>
<dbReference type="PANTHER" id="PTHR11761">
    <property type="entry name" value="50S/60S RIBOSOMAL PROTEIN L14/L23"/>
    <property type="match status" value="1"/>
</dbReference>
<dbReference type="PANTHER" id="PTHR11761:SF3">
    <property type="entry name" value="LARGE RIBOSOMAL SUBUNIT PROTEIN UL14M"/>
    <property type="match status" value="1"/>
</dbReference>
<dbReference type="Pfam" id="PF00238">
    <property type="entry name" value="Ribosomal_L14"/>
    <property type="match status" value="1"/>
</dbReference>
<dbReference type="SMART" id="SM01374">
    <property type="entry name" value="Ribosomal_L14"/>
    <property type="match status" value="1"/>
</dbReference>
<dbReference type="SUPFAM" id="SSF50193">
    <property type="entry name" value="Ribosomal protein L14"/>
    <property type="match status" value="1"/>
</dbReference>
<dbReference type="PROSITE" id="PS00049">
    <property type="entry name" value="RIBOSOMAL_L14"/>
    <property type="match status" value="1"/>
</dbReference>
<organism>
    <name type="scientific">Thermoanaerobacter pseudethanolicus (strain ATCC 33223 / 39E)</name>
    <name type="common">Clostridium thermohydrosulfuricum</name>
    <dbReference type="NCBI Taxonomy" id="340099"/>
    <lineage>
        <taxon>Bacteria</taxon>
        <taxon>Bacillati</taxon>
        <taxon>Bacillota</taxon>
        <taxon>Clostridia</taxon>
        <taxon>Thermoanaerobacterales</taxon>
        <taxon>Thermoanaerobacteraceae</taxon>
        <taxon>Thermoanaerobacter</taxon>
    </lineage>
</organism>
<sequence length="122" mass="13365">MIQPQTRLKVADNTGAKEIMCIRLEGGSNRKFSNVGDVIVASVKSATPGGVVKKGEVVKAVIVRTKKGIARKDGTYIRFDDNAAVIIRDDKQPRGTRIFGPVARELREKDFMKIISLAPEVL</sequence>